<accession>Q9Y5A6</accession>
<accession>A4D2A6</accession>
<accession>D6W5T9</accession>
<accession>Q9H0B5</accession>
<protein>
    <recommendedName>
        <fullName>Zinc finger and SCAN domain-containing protein 21</fullName>
    </recommendedName>
    <alternativeName>
        <fullName>Renal carcinoma antigen NY-REN-21</fullName>
    </alternativeName>
    <alternativeName>
        <fullName>Zinc finger protein 38 homolog</fullName>
        <shortName>Zfp-38</shortName>
    </alternativeName>
</protein>
<sequence length="473" mass="53658">MMTKVLGMAPVLGPRPPQEQVGPLMVKVEEKEEKGKYLPSLEMFRQRFRQFGYHDTPGPREALSQLRVLCCEWLRPEIHTKEQILELLVLEQFLTILPQELQAWVQEHCPESAEEAVTLLEDLERELDEPGHQVSTPPNEQKPVWEKISSSGTAKESPSSMQPQPLETSHKYESWGPLYIQESGEEQEFAQDPRKVRDCRLSTQHEESADEQKGSEAEGLKGDIISVIIANKPEASLERQCVNLENEKGTKPPLQEAGSKKGRESVPTKPTPGERRYICAECGKAFSNSSNLTKHRRTHTGEKPYVCTKCGKAFSHSSNLTLHYRTHLVDRPYDCKCGKAFGQSSDLLKHQRMHTEEAPYQCKDCGKAFSGKGSLIRHYRIHTGEKPYQCNECGKSFSQHAGLSSHQRLHTGEKPYKCKECGKAFNHSSNFNKHHRIHTGEKPYWCHHCGKTFCSKSNLSKHQRVHTGEGEAP</sequence>
<proteinExistence type="evidence at protein level"/>
<name>ZSC21_HUMAN</name>
<gene>
    <name type="primary">ZSCAN21</name>
    <name type="synonym">ZFP38</name>
    <name type="synonym">ZNF38</name>
</gene>
<comment type="function">
    <text evidence="1">Strong transcriptional activator (By similarity). Plays an important role in spermatogenesis; essential for the progression of meiotic prophase I in spermatocytes (By similarity).</text>
</comment>
<comment type="interaction">
    <interactant intactId="EBI-10281938">
        <id>Q9Y5A6</id>
    </interactant>
    <interactant intactId="EBI-2559016">
        <id>Q6NZI2</id>
        <label>CAVIN1</label>
    </interactant>
    <organismsDiffer>false</organismsDiffer>
    <experiments>3</experiments>
</comment>
<comment type="interaction">
    <interactant intactId="EBI-10281938">
        <id>Q9Y5A6</id>
    </interactant>
    <interactant intactId="EBI-739624">
        <id>Q8NHQ1</id>
        <label>CEP70</label>
    </interactant>
    <organismsDiffer>false</organismsDiffer>
    <experiments>3</experiments>
</comment>
<comment type="interaction">
    <interactant intactId="EBI-10281938">
        <id>Q9Y5A6</id>
    </interactant>
    <interactant intactId="EBI-750020">
        <id>P49760</id>
        <label>CLK2</label>
    </interactant>
    <organismsDiffer>false</organismsDiffer>
    <experiments>5</experiments>
</comment>
<comment type="interaction">
    <interactant intactId="EBI-10281938">
        <id>Q9Y5A6</id>
    </interactant>
    <interactant intactId="EBI-739789">
        <id>Q92997</id>
        <label>DVL3</label>
    </interactant>
    <organismsDiffer>false</organismsDiffer>
    <experiments>3</experiments>
</comment>
<comment type="interaction">
    <interactant intactId="EBI-10281938">
        <id>Q9Y5A6</id>
    </interactant>
    <interactant intactId="EBI-740418">
        <id>O75791</id>
        <label>GRAP2</label>
    </interactant>
    <organismsDiffer>false</organismsDiffer>
    <experiments>6</experiments>
</comment>
<comment type="interaction">
    <interactant intactId="EBI-10281938">
        <id>Q9Y5A6</id>
    </interactant>
    <interactant intactId="EBI-10171697">
        <id>Q6A162</id>
        <label>KRT40</label>
    </interactant>
    <organismsDiffer>false</organismsDiffer>
    <experiments>3</experiments>
</comment>
<comment type="interaction">
    <interactant intactId="EBI-10281938">
        <id>Q9Y5A6</id>
    </interactant>
    <interactant intactId="EBI-10172150">
        <id>P60370</id>
        <label>KRTAP10-5</label>
    </interactant>
    <organismsDiffer>false</organismsDiffer>
    <experiments>3</experiments>
</comment>
<comment type="interaction">
    <interactant intactId="EBI-10281938">
        <id>Q9Y5A6</id>
    </interactant>
    <interactant intactId="EBI-10172290">
        <id>P60409</id>
        <label>KRTAP10-7</label>
    </interactant>
    <organismsDiffer>false</organismsDiffer>
    <experiments>3</experiments>
</comment>
<comment type="interaction">
    <interactant intactId="EBI-10281938">
        <id>Q9Y5A6</id>
    </interactant>
    <interactant intactId="EBI-10171774">
        <id>P60410</id>
        <label>KRTAP10-8</label>
    </interactant>
    <organismsDiffer>false</organismsDiffer>
    <experiments>6</experiments>
</comment>
<comment type="interaction">
    <interactant intactId="EBI-10281938">
        <id>Q9Y5A6</id>
    </interactant>
    <interactant intactId="EBI-10172052">
        <id>P60411</id>
        <label>KRTAP10-9</label>
    </interactant>
    <organismsDiffer>false</organismsDiffer>
    <experiments>3</experiments>
</comment>
<comment type="interaction">
    <interactant intactId="EBI-10281938">
        <id>Q9Y5A6</id>
    </interactant>
    <interactant intactId="EBI-11953334">
        <id>P60328</id>
        <label>KRTAP12-3</label>
    </interactant>
    <organismsDiffer>false</organismsDiffer>
    <experiments>3</experiments>
</comment>
<comment type="interaction">
    <interactant intactId="EBI-10281938">
        <id>Q9Y5A6</id>
    </interactant>
    <interactant intactId="EBI-79165">
        <id>Q9NRD5</id>
        <label>PICK1</label>
    </interactant>
    <organismsDiffer>false</organismsDiffer>
    <experiments>3</experiments>
</comment>
<comment type="interaction">
    <interactant intactId="EBI-10281938">
        <id>Q9Y5A6</id>
    </interactant>
    <interactant intactId="EBI-725997">
        <id>Q8WV44</id>
        <label>TRIM41</label>
    </interactant>
    <organismsDiffer>false</organismsDiffer>
    <experiments>3</experiments>
</comment>
<comment type="interaction">
    <interactant intactId="EBI-10281938">
        <id>Q9Y5A6</id>
    </interactant>
    <interactant intactId="EBI-2818641">
        <id>Q969J2</id>
        <label>ZKSCAN4</label>
    </interactant>
    <organismsDiffer>false</organismsDiffer>
    <experiments>5</experiments>
</comment>
<comment type="interaction">
    <interactant intactId="EBI-10281938">
        <id>Q9Y5A6</id>
    </interactant>
    <interactant intactId="EBI-743851">
        <id>Q9P0L1</id>
        <label>ZKSCAN7</label>
    </interactant>
    <organismsDiffer>false</organismsDiffer>
    <experiments>3</experiments>
</comment>
<comment type="interaction">
    <interactant intactId="EBI-10281938">
        <id>Q9Y5A6</id>
    </interactant>
    <interactant intactId="EBI-10698225">
        <id>Q9P0L1-2</id>
        <label>ZKSCAN7</label>
    </interactant>
    <organismsDiffer>false</organismsDiffer>
    <experiments>3</experiments>
</comment>
<comment type="interaction">
    <interactant intactId="EBI-10281938">
        <id>Q9Y5A6</id>
    </interactant>
    <interactant intactId="EBI-12838388">
        <id>O14771</id>
        <label>ZNF213</label>
    </interactant>
    <organismsDiffer>false</organismsDiffer>
    <experiments>4</experiments>
</comment>
<comment type="interaction">
    <interactant intactId="EBI-10281938">
        <id>Q9Y5A6</id>
    </interactant>
    <interactant intactId="EBI-707773">
        <id>P17028</id>
        <label>ZNF24</label>
    </interactant>
    <organismsDiffer>false</organismsDiffer>
    <experiments>8</experiments>
</comment>
<comment type="interaction">
    <interactant intactId="EBI-10281938">
        <id>Q9Y5A6</id>
    </interactant>
    <interactant intactId="EBI-12328453">
        <id>Q96N95-3</id>
        <label>ZNF396</label>
    </interactant>
    <organismsDiffer>false</organismsDiffer>
    <experiments>3</experiments>
</comment>
<comment type="interaction">
    <interactant intactId="EBI-10281938">
        <id>Q9Y5A6</id>
    </interactant>
    <interactant intactId="EBI-740232">
        <id>Q9NWS9-2</id>
        <label>ZNF446</label>
    </interactant>
    <organismsDiffer>false</organismsDiffer>
    <experiments>8</experiments>
</comment>
<comment type="interaction">
    <interactant intactId="EBI-10281938">
        <id>Q9Y5A6</id>
    </interactant>
    <interactant intactId="EBI-10196963">
        <id>Q6P088</id>
        <label>ZNF483</label>
    </interactant>
    <organismsDiffer>false</organismsDiffer>
    <experiments>3</experiments>
</comment>
<comment type="interaction">
    <interactant intactId="EBI-10281938">
        <id>Q9Y5A6</id>
    </interactant>
    <interactant intactId="EBI-743906">
        <id>Q96IT1</id>
        <label>ZNF496</label>
    </interactant>
    <organismsDiffer>false</organismsDiffer>
    <experiments>6</experiments>
</comment>
<comment type="interaction">
    <interactant intactId="EBI-10281938">
        <id>Q9Y5A6</id>
    </interactant>
    <interactant intactId="EBI-11962574">
        <id>Q96EG3</id>
        <label>ZNF837</label>
    </interactant>
    <organismsDiffer>false</organismsDiffer>
    <experiments>3</experiments>
</comment>
<comment type="interaction">
    <interactant intactId="EBI-10281938">
        <id>Q9Y5A6</id>
    </interactant>
    <interactant intactId="EBI-1210440">
        <id>O43309</id>
        <label>ZSCAN12</label>
    </interactant>
    <organismsDiffer>false</organismsDiffer>
    <experiments>3</experiments>
</comment>
<comment type="interaction">
    <interactant intactId="EBI-10281938">
        <id>Q9Y5A6</id>
    </interactant>
    <interactant intactId="EBI-10178224">
        <id>P10073</id>
        <label>ZSCAN22</label>
    </interactant>
    <organismsDiffer>false</organismsDiffer>
    <experiments>3</experiments>
</comment>
<comment type="interaction">
    <interactant intactId="EBI-10281938">
        <id>Q9Y5A6</id>
    </interactant>
    <interactant intactId="EBI-5667532">
        <id>Q3MJ62</id>
        <label>ZSCAN23</label>
    </interactant>
    <organismsDiffer>false</organismsDiffer>
    <experiments>4</experiments>
</comment>
<comment type="subcellular location">
    <subcellularLocation>
        <location evidence="3">Nucleus</location>
    </subcellularLocation>
</comment>
<comment type="similarity">
    <text evidence="5">Belongs to the krueppel C2H2-type zinc-finger protein family.</text>
</comment>
<dbReference type="EMBL" id="AL136865">
    <property type="protein sequence ID" value="CAB66799.1"/>
    <property type="molecule type" value="mRNA"/>
</dbReference>
<dbReference type="EMBL" id="CH236956">
    <property type="protein sequence ID" value="EAL23860.1"/>
    <property type="molecule type" value="Genomic_DNA"/>
</dbReference>
<dbReference type="EMBL" id="CH471091">
    <property type="protein sequence ID" value="EAW76609.1"/>
    <property type="molecule type" value="Genomic_DNA"/>
</dbReference>
<dbReference type="EMBL" id="CH471091">
    <property type="protein sequence ID" value="EAW76610.1"/>
    <property type="molecule type" value="Genomic_DNA"/>
</dbReference>
<dbReference type="EMBL" id="BC047309">
    <property type="protein sequence ID" value="AAH47309.1"/>
    <property type="molecule type" value="mRNA"/>
</dbReference>
<dbReference type="EMBL" id="AF155100">
    <property type="protein sequence ID" value="AAD42866.1"/>
    <property type="molecule type" value="mRNA"/>
</dbReference>
<dbReference type="CCDS" id="CCDS5681.1"/>
<dbReference type="RefSeq" id="NP_001349708.1">
    <property type="nucleotide sequence ID" value="NM_001362779.2"/>
</dbReference>
<dbReference type="RefSeq" id="NP_001349709.1">
    <property type="nucleotide sequence ID" value="NM_001362780.2"/>
</dbReference>
<dbReference type="RefSeq" id="NP_666019.1">
    <property type="nucleotide sequence ID" value="NM_145914.3"/>
</dbReference>
<dbReference type="RefSeq" id="XP_005250625.1">
    <property type="nucleotide sequence ID" value="XM_005250568.5"/>
</dbReference>
<dbReference type="RefSeq" id="XP_006716176.1">
    <property type="nucleotide sequence ID" value="XM_006716113.4"/>
</dbReference>
<dbReference type="RefSeq" id="XP_016868073.1">
    <property type="nucleotide sequence ID" value="XM_017012584.1"/>
</dbReference>
<dbReference type="RefSeq" id="XP_047276762.1">
    <property type="nucleotide sequence ID" value="XM_047420806.1"/>
</dbReference>
<dbReference type="RefSeq" id="XP_054214925.1">
    <property type="nucleotide sequence ID" value="XM_054358950.1"/>
</dbReference>
<dbReference type="RefSeq" id="XP_054214926.1">
    <property type="nucleotide sequence ID" value="XM_054358951.1"/>
</dbReference>
<dbReference type="RefSeq" id="XP_054214927.1">
    <property type="nucleotide sequence ID" value="XM_054358952.1"/>
</dbReference>
<dbReference type="SMR" id="Q9Y5A6"/>
<dbReference type="BioGRID" id="113416">
    <property type="interactions" value="106"/>
</dbReference>
<dbReference type="FunCoup" id="Q9Y5A6">
    <property type="interactions" value="939"/>
</dbReference>
<dbReference type="IntAct" id="Q9Y5A6">
    <property type="interactions" value="74"/>
</dbReference>
<dbReference type="STRING" id="9606.ENSP00000292450"/>
<dbReference type="GlyGen" id="Q9Y5A6">
    <property type="glycosylation" value="1 site"/>
</dbReference>
<dbReference type="iPTMnet" id="Q9Y5A6"/>
<dbReference type="PhosphoSitePlus" id="Q9Y5A6"/>
<dbReference type="BioMuta" id="ZSCAN21"/>
<dbReference type="DMDM" id="20141976"/>
<dbReference type="jPOST" id="Q9Y5A6"/>
<dbReference type="MassIVE" id="Q9Y5A6"/>
<dbReference type="PaxDb" id="9606-ENSP00000292450"/>
<dbReference type="PeptideAtlas" id="Q9Y5A6"/>
<dbReference type="ProteomicsDB" id="86323"/>
<dbReference type="Pumba" id="Q9Y5A6"/>
<dbReference type="ABCD" id="Q9Y5A6">
    <property type="antibodies" value="2 sequenced antibodies"/>
</dbReference>
<dbReference type="Antibodypedia" id="16310">
    <property type="antibodies" value="420 antibodies from 30 providers"/>
</dbReference>
<dbReference type="DNASU" id="7589"/>
<dbReference type="Ensembl" id="ENST00000292450.9">
    <property type="protein sequence ID" value="ENSP00000292450.4"/>
    <property type="gene ID" value="ENSG00000166529.16"/>
</dbReference>
<dbReference type="GeneID" id="7589"/>
<dbReference type="KEGG" id="hsa:7589"/>
<dbReference type="MANE-Select" id="ENST00000292450.9">
    <property type="protein sequence ID" value="ENSP00000292450.4"/>
    <property type="RefSeq nucleotide sequence ID" value="NM_145914.3"/>
    <property type="RefSeq protein sequence ID" value="NP_666019.1"/>
</dbReference>
<dbReference type="UCSC" id="uc003uso.5">
    <property type="organism name" value="human"/>
</dbReference>
<dbReference type="AGR" id="HGNC:13104"/>
<dbReference type="CTD" id="7589"/>
<dbReference type="DisGeNET" id="7589"/>
<dbReference type="GeneCards" id="ZSCAN21"/>
<dbReference type="HGNC" id="HGNC:13104">
    <property type="gene designation" value="ZSCAN21"/>
</dbReference>
<dbReference type="HPA" id="ENSG00000166529">
    <property type="expression patterns" value="Low tissue specificity"/>
</dbReference>
<dbReference type="neXtProt" id="NX_Q9Y5A6"/>
<dbReference type="OpenTargets" id="ENSG00000166529"/>
<dbReference type="PharmGKB" id="PA162410981"/>
<dbReference type="VEuPathDB" id="HostDB:ENSG00000166529"/>
<dbReference type="eggNOG" id="KOG1721">
    <property type="taxonomic scope" value="Eukaryota"/>
</dbReference>
<dbReference type="GeneTree" id="ENSGT00940000161607"/>
<dbReference type="HOGENOM" id="CLU_002678_49_8_1"/>
<dbReference type="InParanoid" id="Q9Y5A6"/>
<dbReference type="OMA" id="WEPLYIQ"/>
<dbReference type="OrthoDB" id="6077919at2759"/>
<dbReference type="PAN-GO" id="Q9Y5A6">
    <property type="GO annotations" value="3 GO annotations based on evolutionary models"/>
</dbReference>
<dbReference type="PhylomeDB" id="Q9Y5A6"/>
<dbReference type="TreeFam" id="TF338304"/>
<dbReference type="PathwayCommons" id="Q9Y5A6"/>
<dbReference type="SignaLink" id="Q9Y5A6"/>
<dbReference type="BioGRID-ORCS" id="7589">
    <property type="hits" value="9 hits in 1178 CRISPR screens"/>
</dbReference>
<dbReference type="ChiTaRS" id="ZSCAN21">
    <property type="organism name" value="human"/>
</dbReference>
<dbReference type="GeneWiki" id="ZSCAN21"/>
<dbReference type="GenomeRNAi" id="7589"/>
<dbReference type="Pharos" id="Q9Y5A6">
    <property type="development level" value="Tbio"/>
</dbReference>
<dbReference type="PRO" id="PR:Q9Y5A6"/>
<dbReference type="Proteomes" id="UP000005640">
    <property type="component" value="Chromosome 7"/>
</dbReference>
<dbReference type="RNAct" id="Q9Y5A6">
    <property type="molecule type" value="protein"/>
</dbReference>
<dbReference type="Bgee" id="ENSG00000166529">
    <property type="expression patterns" value="Expressed in oocyte and 167 other cell types or tissues"/>
</dbReference>
<dbReference type="ExpressionAtlas" id="Q9Y5A6">
    <property type="expression patterns" value="baseline and differential"/>
</dbReference>
<dbReference type="GO" id="GO:0005634">
    <property type="term" value="C:nucleus"/>
    <property type="evidence" value="ECO:0007669"/>
    <property type="project" value="UniProtKB-SubCell"/>
</dbReference>
<dbReference type="GO" id="GO:0001228">
    <property type="term" value="F:DNA-binding transcription activator activity, RNA polymerase II-specific"/>
    <property type="evidence" value="ECO:0000314"/>
    <property type="project" value="NTNU_SB"/>
</dbReference>
<dbReference type="GO" id="GO:0000981">
    <property type="term" value="F:DNA-binding transcription factor activity, RNA polymerase II-specific"/>
    <property type="evidence" value="ECO:0000318"/>
    <property type="project" value="GO_Central"/>
</dbReference>
<dbReference type="GO" id="GO:0000978">
    <property type="term" value="F:RNA polymerase II cis-regulatory region sequence-specific DNA binding"/>
    <property type="evidence" value="ECO:0000314"/>
    <property type="project" value="NTNU_SB"/>
</dbReference>
<dbReference type="GO" id="GO:0008270">
    <property type="term" value="F:zinc ion binding"/>
    <property type="evidence" value="ECO:0007669"/>
    <property type="project" value="UniProtKB-KW"/>
</dbReference>
<dbReference type="GO" id="GO:0030154">
    <property type="term" value="P:cell differentiation"/>
    <property type="evidence" value="ECO:0007669"/>
    <property type="project" value="UniProtKB-KW"/>
</dbReference>
<dbReference type="GO" id="GO:0007141">
    <property type="term" value="P:male meiosis I"/>
    <property type="evidence" value="ECO:0000250"/>
    <property type="project" value="UniProtKB"/>
</dbReference>
<dbReference type="GO" id="GO:0045944">
    <property type="term" value="P:positive regulation of transcription by RNA polymerase II"/>
    <property type="evidence" value="ECO:0000314"/>
    <property type="project" value="NTNU_SB"/>
</dbReference>
<dbReference type="GO" id="GO:0006355">
    <property type="term" value="P:regulation of DNA-templated transcription"/>
    <property type="evidence" value="ECO:0000315"/>
    <property type="project" value="UniProtKB"/>
</dbReference>
<dbReference type="GO" id="GO:0006357">
    <property type="term" value="P:regulation of transcription by RNA polymerase II"/>
    <property type="evidence" value="ECO:0000318"/>
    <property type="project" value="GO_Central"/>
</dbReference>
<dbReference type="GO" id="GO:0007283">
    <property type="term" value="P:spermatogenesis"/>
    <property type="evidence" value="ECO:0000250"/>
    <property type="project" value="UniProtKB"/>
</dbReference>
<dbReference type="CDD" id="cd07936">
    <property type="entry name" value="SCAN"/>
    <property type="match status" value="1"/>
</dbReference>
<dbReference type="FunFam" id="3.30.160.60:FF:000172">
    <property type="entry name" value="Zinc finger and SCAN domain containing 21"/>
    <property type="match status" value="2"/>
</dbReference>
<dbReference type="FunFam" id="3.30.160.60:FF:000151">
    <property type="entry name" value="Zinc finger and SCAN domain-containing 21"/>
    <property type="match status" value="1"/>
</dbReference>
<dbReference type="FunFam" id="3.30.160.60:FF:000467">
    <property type="entry name" value="Zinc finger and SCAN domain-containing 21"/>
    <property type="match status" value="1"/>
</dbReference>
<dbReference type="FunFam" id="3.30.160.60:FF:000955">
    <property type="entry name" value="Zinc finger and SCAN domain-containing protein 21"/>
    <property type="match status" value="1"/>
</dbReference>
<dbReference type="FunFam" id="3.30.160.60:FF:001047">
    <property type="entry name" value="Zinc finger and SCAN domain-containing protein 21"/>
    <property type="match status" value="1"/>
</dbReference>
<dbReference type="FunFam" id="1.10.4020.10:FF:000001">
    <property type="entry name" value="zinc finger protein 263 isoform X1"/>
    <property type="match status" value="1"/>
</dbReference>
<dbReference type="FunFam" id="3.30.160.60:FF:002343">
    <property type="entry name" value="Zinc finger protein 33A"/>
    <property type="match status" value="1"/>
</dbReference>
<dbReference type="Gene3D" id="3.30.160.60">
    <property type="entry name" value="Classic Zinc Finger"/>
    <property type="match status" value="7"/>
</dbReference>
<dbReference type="Gene3D" id="1.10.4020.10">
    <property type="entry name" value="DNA breaking-rejoining enzymes"/>
    <property type="match status" value="1"/>
</dbReference>
<dbReference type="InterPro" id="IPR003309">
    <property type="entry name" value="SCAN_dom"/>
</dbReference>
<dbReference type="InterPro" id="IPR038269">
    <property type="entry name" value="SCAN_sf"/>
</dbReference>
<dbReference type="InterPro" id="IPR036236">
    <property type="entry name" value="Znf_C2H2_sf"/>
</dbReference>
<dbReference type="InterPro" id="IPR013087">
    <property type="entry name" value="Znf_C2H2_type"/>
</dbReference>
<dbReference type="PANTHER" id="PTHR23226">
    <property type="entry name" value="ZINC FINGER AND SCAN DOMAIN-CONTAINING"/>
    <property type="match status" value="1"/>
</dbReference>
<dbReference type="PANTHER" id="PTHR23226:SF366">
    <property type="entry name" value="ZINC FINGER PROTEIN ZFP2"/>
    <property type="match status" value="1"/>
</dbReference>
<dbReference type="Pfam" id="PF02023">
    <property type="entry name" value="SCAN"/>
    <property type="match status" value="1"/>
</dbReference>
<dbReference type="Pfam" id="PF00096">
    <property type="entry name" value="zf-C2H2"/>
    <property type="match status" value="5"/>
</dbReference>
<dbReference type="Pfam" id="PF13465">
    <property type="entry name" value="zf-H2C2_2"/>
    <property type="match status" value="1"/>
</dbReference>
<dbReference type="SMART" id="SM00431">
    <property type="entry name" value="SCAN"/>
    <property type="match status" value="1"/>
</dbReference>
<dbReference type="SMART" id="SM00355">
    <property type="entry name" value="ZnF_C2H2"/>
    <property type="match status" value="7"/>
</dbReference>
<dbReference type="SUPFAM" id="SSF57667">
    <property type="entry name" value="beta-beta-alpha zinc fingers"/>
    <property type="match status" value="4"/>
</dbReference>
<dbReference type="SUPFAM" id="SSF47353">
    <property type="entry name" value="Retrovirus capsid dimerization domain-like"/>
    <property type="match status" value="1"/>
</dbReference>
<dbReference type="PROSITE" id="PS50804">
    <property type="entry name" value="SCAN_BOX"/>
    <property type="match status" value="1"/>
</dbReference>
<dbReference type="PROSITE" id="PS00028">
    <property type="entry name" value="ZINC_FINGER_C2H2_1"/>
    <property type="match status" value="6"/>
</dbReference>
<dbReference type="PROSITE" id="PS50157">
    <property type="entry name" value="ZINC_FINGER_C2H2_2"/>
    <property type="match status" value="7"/>
</dbReference>
<evidence type="ECO:0000250" key="1">
    <source>
        <dbReference type="UniProtKB" id="Q07231"/>
    </source>
</evidence>
<evidence type="ECO:0000255" key="2">
    <source>
        <dbReference type="PROSITE-ProRule" id="PRU00042"/>
    </source>
</evidence>
<evidence type="ECO:0000255" key="3">
    <source>
        <dbReference type="PROSITE-ProRule" id="PRU00187"/>
    </source>
</evidence>
<evidence type="ECO:0000256" key="4">
    <source>
        <dbReference type="SAM" id="MobiDB-lite"/>
    </source>
</evidence>
<evidence type="ECO:0000305" key="5"/>
<evidence type="ECO:0007744" key="6">
    <source>
    </source>
</evidence>
<keyword id="KW-0010">Activator</keyword>
<keyword id="KW-0221">Differentiation</keyword>
<keyword id="KW-0238">DNA-binding</keyword>
<keyword id="KW-1017">Isopeptide bond</keyword>
<keyword id="KW-0469">Meiosis</keyword>
<keyword id="KW-0479">Metal-binding</keyword>
<keyword id="KW-0539">Nucleus</keyword>
<keyword id="KW-1267">Proteomics identification</keyword>
<keyword id="KW-1185">Reference proteome</keyword>
<keyword id="KW-0677">Repeat</keyword>
<keyword id="KW-0744">Spermatogenesis</keyword>
<keyword id="KW-0804">Transcription</keyword>
<keyword id="KW-0805">Transcription regulation</keyword>
<keyword id="KW-0832">Ubl conjugation</keyword>
<keyword id="KW-0862">Zinc</keyword>
<keyword id="KW-0863">Zinc-finger</keyword>
<reference key="1">
    <citation type="journal article" date="2001" name="Genome Res.">
        <title>Towards a catalog of human genes and proteins: sequencing and analysis of 500 novel complete protein coding human cDNAs.</title>
        <authorList>
            <person name="Wiemann S."/>
            <person name="Weil B."/>
            <person name="Wellenreuther R."/>
            <person name="Gassenhuber J."/>
            <person name="Glassl S."/>
            <person name="Ansorge W."/>
            <person name="Boecher M."/>
            <person name="Bloecker H."/>
            <person name="Bauersachs S."/>
            <person name="Blum H."/>
            <person name="Lauber J."/>
            <person name="Duesterhoeft A."/>
            <person name="Beyer A."/>
            <person name="Koehrer K."/>
            <person name="Strack N."/>
            <person name="Mewes H.-W."/>
            <person name="Ottenwaelder B."/>
            <person name="Obermaier B."/>
            <person name="Tampe J."/>
            <person name="Heubner D."/>
            <person name="Wambutt R."/>
            <person name="Korn B."/>
            <person name="Klein M."/>
            <person name="Poustka A."/>
        </authorList>
    </citation>
    <scope>NUCLEOTIDE SEQUENCE [LARGE SCALE MRNA]</scope>
    <source>
        <tissue>Testis</tissue>
    </source>
</reference>
<reference key="2">
    <citation type="journal article" date="2003" name="Science">
        <title>Human chromosome 7: DNA sequence and biology.</title>
        <authorList>
            <person name="Scherer S.W."/>
            <person name="Cheung J."/>
            <person name="MacDonald J.R."/>
            <person name="Osborne L.R."/>
            <person name="Nakabayashi K."/>
            <person name="Herbrick J.-A."/>
            <person name="Carson A.R."/>
            <person name="Parker-Katiraee L."/>
            <person name="Skaug J."/>
            <person name="Khaja R."/>
            <person name="Zhang J."/>
            <person name="Hudek A.K."/>
            <person name="Li M."/>
            <person name="Haddad M."/>
            <person name="Duggan G.E."/>
            <person name="Fernandez B.A."/>
            <person name="Kanematsu E."/>
            <person name="Gentles S."/>
            <person name="Christopoulos C.C."/>
            <person name="Choufani S."/>
            <person name="Kwasnicka D."/>
            <person name="Zheng X.H."/>
            <person name="Lai Z."/>
            <person name="Nusskern D.R."/>
            <person name="Zhang Q."/>
            <person name="Gu Z."/>
            <person name="Lu F."/>
            <person name="Zeesman S."/>
            <person name="Nowaczyk M.J."/>
            <person name="Teshima I."/>
            <person name="Chitayat D."/>
            <person name="Shuman C."/>
            <person name="Weksberg R."/>
            <person name="Zackai E.H."/>
            <person name="Grebe T.A."/>
            <person name="Cox S.R."/>
            <person name="Kirkpatrick S.J."/>
            <person name="Rahman N."/>
            <person name="Friedman J.M."/>
            <person name="Heng H.H.Q."/>
            <person name="Pelicci P.G."/>
            <person name="Lo-Coco F."/>
            <person name="Belloni E."/>
            <person name="Shaffer L.G."/>
            <person name="Pober B."/>
            <person name="Morton C.C."/>
            <person name="Gusella J.F."/>
            <person name="Bruns G.A.P."/>
            <person name="Korf B.R."/>
            <person name="Quade B.J."/>
            <person name="Ligon A.H."/>
            <person name="Ferguson H."/>
            <person name="Higgins A.W."/>
            <person name="Leach N.T."/>
            <person name="Herrick S.R."/>
            <person name="Lemyre E."/>
            <person name="Farra C.G."/>
            <person name="Kim H.-G."/>
            <person name="Summers A.M."/>
            <person name="Gripp K.W."/>
            <person name="Roberts W."/>
            <person name="Szatmari P."/>
            <person name="Winsor E.J.T."/>
            <person name="Grzeschik K.-H."/>
            <person name="Teebi A."/>
            <person name="Minassian B.A."/>
            <person name="Kere J."/>
            <person name="Armengol L."/>
            <person name="Pujana M.A."/>
            <person name="Estivill X."/>
            <person name="Wilson M.D."/>
            <person name="Koop B.F."/>
            <person name="Tosi S."/>
            <person name="Moore G.E."/>
            <person name="Boright A.P."/>
            <person name="Zlotorynski E."/>
            <person name="Kerem B."/>
            <person name="Kroisel P.M."/>
            <person name="Petek E."/>
            <person name="Oscier D.G."/>
            <person name="Mould S.J."/>
            <person name="Doehner H."/>
            <person name="Doehner K."/>
            <person name="Rommens J.M."/>
            <person name="Vincent J.B."/>
            <person name="Venter J.C."/>
            <person name="Li P.W."/>
            <person name="Mural R.J."/>
            <person name="Adams M.D."/>
            <person name="Tsui L.-C."/>
        </authorList>
    </citation>
    <scope>NUCLEOTIDE SEQUENCE [LARGE SCALE GENOMIC DNA]</scope>
</reference>
<reference key="3">
    <citation type="submission" date="2005-09" db="EMBL/GenBank/DDBJ databases">
        <authorList>
            <person name="Mural R.J."/>
            <person name="Istrail S."/>
            <person name="Sutton G.G."/>
            <person name="Florea L."/>
            <person name="Halpern A.L."/>
            <person name="Mobarry C.M."/>
            <person name="Lippert R."/>
            <person name="Walenz B."/>
            <person name="Shatkay H."/>
            <person name="Dew I."/>
            <person name="Miller J.R."/>
            <person name="Flanigan M.J."/>
            <person name="Edwards N.J."/>
            <person name="Bolanos R."/>
            <person name="Fasulo D."/>
            <person name="Halldorsson B.V."/>
            <person name="Hannenhalli S."/>
            <person name="Turner R."/>
            <person name="Yooseph S."/>
            <person name="Lu F."/>
            <person name="Nusskern D.R."/>
            <person name="Shue B.C."/>
            <person name="Zheng X.H."/>
            <person name="Zhong F."/>
            <person name="Delcher A.L."/>
            <person name="Huson D.H."/>
            <person name="Kravitz S.A."/>
            <person name="Mouchard L."/>
            <person name="Reinert K."/>
            <person name="Remington K.A."/>
            <person name="Clark A.G."/>
            <person name="Waterman M.S."/>
            <person name="Eichler E.E."/>
            <person name="Adams M.D."/>
            <person name="Hunkapiller M.W."/>
            <person name="Myers E.W."/>
            <person name="Venter J.C."/>
        </authorList>
    </citation>
    <scope>NUCLEOTIDE SEQUENCE [LARGE SCALE GENOMIC DNA]</scope>
</reference>
<reference key="4">
    <citation type="journal article" date="2004" name="Genome Res.">
        <title>The status, quality, and expansion of the NIH full-length cDNA project: the Mammalian Gene Collection (MGC).</title>
        <authorList>
            <consortium name="The MGC Project Team"/>
        </authorList>
    </citation>
    <scope>NUCLEOTIDE SEQUENCE [LARGE SCALE MRNA]</scope>
    <source>
        <tissue>Cervix</tissue>
    </source>
</reference>
<reference key="5">
    <citation type="journal article" date="1999" name="Int. J. Cancer">
        <title>Antigens recognized by autologous antibody in patients with renal-cell carcinoma.</title>
        <authorList>
            <person name="Scanlan M.J."/>
            <person name="Gordan J.D."/>
            <person name="Williamson B."/>
            <person name="Stockert E."/>
            <person name="Bander N.H."/>
            <person name="Jongeneel C.V."/>
            <person name="Gure A.O."/>
            <person name="Jaeger D."/>
            <person name="Jaeger E."/>
            <person name="Knuth A."/>
            <person name="Chen Y.-T."/>
            <person name="Old L.J."/>
        </authorList>
    </citation>
    <scope>NUCLEOTIDE SEQUENCE [MRNA] OF 62-473</scope>
    <scope>IDENTIFICATION AS A RENAL CANCER ANTIGEN</scope>
    <source>
        <tissue>Renal cell carcinoma</tissue>
    </source>
</reference>
<reference key="6">
    <citation type="journal article" date="2017" name="Nat. Struct. Mol. Biol.">
        <title>Site-specific mapping of the human SUMO proteome reveals co-modification with phosphorylation.</title>
        <authorList>
            <person name="Hendriks I.A."/>
            <person name="Lyon D."/>
            <person name="Young C."/>
            <person name="Jensen L.J."/>
            <person name="Vertegaal A.C."/>
            <person name="Nielsen M.L."/>
        </authorList>
    </citation>
    <scope>SUMOYLATION [LARGE SCALE ANALYSIS] AT LYS-27; LYS-221; LYS-232 AND LYS-349</scope>
    <scope>IDENTIFICATION BY MASS SPECTROMETRY [LARGE SCALE ANALYSIS]</scope>
</reference>
<feature type="chain" id="PRO_0000047297" description="Zinc finger and SCAN domain-containing protein 21">
    <location>
        <begin position="1"/>
        <end position="473"/>
    </location>
</feature>
<feature type="domain" description="SCAN box" evidence="3">
    <location>
        <begin position="45"/>
        <end position="127"/>
    </location>
</feature>
<feature type="zinc finger region" description="C2H2-type 1" evidence="2">
    <location>
        <begin position="277"/>
        <end position="299"/>
    </location>
</feature>
<feature type="zinc finger region" description="C2H2-type 2" evidence="2">
    <location>
        <begin position="305"/>
        <end position="327"/>
    </location>
</feature>
<feature type="zinc finger region" description="C2H2-type 3" evidence="2">
    <location>
        <begin position="333"/>
        <end position="354"/>
    </location>
</feature>
<feature type="zinc finger region" description="C2H2-type 4" evidence="2">
    <location>
        <begin position="360"/>
        <end position="382"/>
    </location>
</feature>
<feature type="zinc finger region" description="C2H2-type 5" evidence="2">
    <location>
        <begin position="388"/>
        <end position="410"/>
    </location>
</feature>
<feature type="zinc finger region" description="C2H2-type 6" evidence="2">
    <location>
        <begin position="416"/>
        <end position="438"/>
    </location>
</feature>
<feature type="zinc finger region" description="C2H2-type 7" evidence="2">
    <location>
        <begin position="444"/>
        <end position="466"/>
    </location>
</feature>
<feature type="region of interest" description="Disordered" evidence="4">
    <location>
        <begin position="127"/>
        <end position="169"/>
    </location>
</feature>
<feature type="region of interest" description="Disordered" evidence="4">
    <location>
        <begin position="244"/>
        <end position="272"/>
    </location>
</feature>
<feature type="compositionally biased region" description="Polar residues" evidence="4">
    <location>
        <begin position="148"/>
        <end position="167"/>
    </location>
</feature>
<feature type="compositionally biased region" description="Basic and acidic residues" evidence="4">
    <location>
        <begin position="258"/>
        <end position="272"/>
    </location>
</feature>
<feature type="cross-link" description="Glycyl lysine isopeptide (Lys-Gly) (interchain with G-Cter in SUMO2)" evidence="6">
    <location>
        <position position="27"/>
    </location>
</feature>
<feature type="cross-link" description="Glycyl lysine isopeptide (Lys-Gly) (interchain with G-Cter in SUMO2)" evidence="6">
    <location>
        <position position="221"/>
    </location>
</feature>
<feature type="cross-link" description="Glycyl lysine isopeptide (Lys-Gly) (interchain with G-Cter in SUMO2)" evidence="6">
    <location>
        <position position="232"/>
    </location>
</feature>
<feature type="cross-link" description="Glycyl lysine isopeptide (Lys-Gly) (interchain with G-Cter in SUMO2)" evidence="6">
    <location>
        <position position="349"/>
    </location>
</feature>
<organism>
    <name type="scientific">Homo sapiens</name>
    <name type="common">Human</name>
    <dbReference type="NCBI Taxonomy" id="9606"/>
    <lineage>
        <taxon>Eukaryota</taxon>
        <taxon>Metazoa</taxon>
        <taxon>Chordata</taxon>
        <taxon>Craniata</taxon>
        <taxon>Vertebrata</taxon>
        <taxon>Euteleostomi</taxon>
        <taxon>Mammalia</taxon>
        <taxon>Eutheria</taxon>
        <taxon>Euarchontoglires</taxon>
        <taxon>Primates</taxon>
        <taxon>Haplorrhini</taxon>
        <taxon>Catarrhini</taxon>
        <taxon>Hominidae</taxon>
        <taxon>Homo</taxon>
    </lineage>
</organism>